<proteinExistence type="evidence at protein level"/>
<accession>Q9W5P1</accession>
<accession>A8Y534</accession>
<comment type="function">
    <text evidence="2">Component of the Mediator complex, a coactivator involved in the regulated transcription of nearly all RNA polymerase II-dependent genes. Mediator functions as a bridge to convey information from gene-specific regulatory proteins to the basal RNA polymerase II transcription machinery. Mediator is recruited to promoters by direct interactions with regulatory proteins and serves as a scaffold for the assembly of a functional preinitiation complex with RNA polymerase II and the general transcription factors. Required for activated transcription of the MtnA, MtnB and MtnD genes.</text>
</comment>
<comment type="subunit">
    <text evidence="2 3 4">Component of the Mediator complex, which includes at least MED4, MED6, MED14, MED17, MED18, MED20, MED21, MED23, MED24, MED27, MED30 and MED31. Also interacts with MED7 and MED10.</text>
</comment>
<comment type="subcellular location">
    <subcellularLocation>
        <location evidence="5">Nucleus</location>
    </subcellularLocation>
</comment>
<comment type="developmental stage">
    <text evidence="2">Maternally encoded. Expression decreases during larval stages then rises during mid-pupal metamorphosis.</text>
</comment>
<evidence type="ECO:0000255" key="1"/>
<evidence type="ECO:0000269" key="2">
    <source>
    </source>
</evidence>
<evidence type="ECO:0000269" key="3">
    <source>
    </source>
</evidence>
<evidence type="ECO:0000269" key="4">
    <source>
    </source>
</evidence>
<evidence type="ECO:0000305" key="5"/>
<name>MED21_DROME</name>
<keyword id="KW-0010">Activator</keyword>
<keyword id="KW-0175">Coiled coil</keyword>
<keyword id="KW-0539">Nucleus</keyword>
<keyword id="KW-1185">Reference proteome</keyword>
<keyword id="KW-0804">Transcription</keyword>
<keyword id="KW-0805">Transcription regulation</keyword>
<gene>
    <name type="primary">MED21</name>
    <name type="synonym">Trap19</name>
    <name type="ORF">CG17397</name>
</gene>
<feature type="chain" id="PRO_0000305954" description="Mediator of RNA polymerase II transcription subunit 21">
    <location>
        <begin position="1"/>
        <end position="142"/>
    </location>
</feature>
<feature type="coiled-coil region" evidence="1">
    <location>
        <begin position="87"/>
        <end position="111"/>
    </location>
</feature>
<reference key="1">
    <citation type="journal article" date="2000" name="Science">
        <title>The genome sequence of Drosophila melanogaster.</title>
        <authorList>
            <person name="Adams M.D."/>
            <person name="Celniker S.E."/>
            <person name="Holt R.A."/>
            <person name="Evans C.A."/>
            <person name="Gocayne J.D."/>
            <person name="Amanatides P.G."/>
            <person name="Scherer S.E."/>
            <person name="Li P.W."/>
            <person name="Hoskins R.A."/>
            <person name="Galle R.F."/>
            <person name="George R.A."/>
            <person name="Lewis S.E."/>
            <person name="Richards S."/>
            <person name="Ashburner M."/>
            <person name="Henderson S.N."/>
            <person name="Sutton G.G."/>
            <person name="Wortman J.R."/>
            <person name="Yandell M.D."/>
            <person name="Zhang Q."/>
            <person name="Chen L.X."/>
            <person name="Brandon R.C."/>
            <person name="Rogers Y.-H.C."/>
            <person name="Blazej R.G."/>
            <person name="Champe M."/>
            <person name="Pfeiffer B.D."/>
            <person name="Wan K.H."/>
            <person name="Doyle C."/>
            <person name="Baxter E.G."/>
            <person name="Helt G."/>
            <person name="Nelson C.R."/>
            <person name="Miklos G.L.G."/>
            <person name="Abril J.F."/>
            <person name="Agbayani A."/>
            <person name="An H.-J."/>
            <person name="Andrews-Pfannkoch C."/>
            <person name="Baldwin D."/>
            <person name="Ballew R.M."/>
            <person name="Basu A."/>
            <person name="Baxendale J."/>
            <person name="Bayraktaroglu L."/>
            <person name="Beasley E.M."/>
            <person name="Beeson K.Y."/>
            <person name="Benos P.V."/>
            <person name="Berman B.P."/>
            <person name="Bhandari D."/>
            <person name="Bolshakov S."/>
            <person name="Borkova D."/>
            <person name="Botchan M.R."/>
            <person name="Bouck J."/>
            <person name="Brokstein P."/>
            <person name="Brottier P."/>
            <person name="Burtis K.C."/>
            <person name="Busam D.A."/>
            <person name="Butler H."/>
            <person name="Cadieu E."/>
            <person name="Center A."/>
            <person name="Chandra I."/>
            <person name="Cherry J.M."/>
            <person name="Cawley S."/>
            <person name="Dahlke C."/>
            <person name="Davenport L.B."/>
            <person name="Davies P."/>
            <person name="de Pablos B."/>
            <person name="Delcher A."/>
            <person name="Deng Z."/>
            <person name="Mays A.D."/>
            <person name="Dew I."/>
            <person name="Dietz S.M."/>
            <person name="Dodson K."/>
            <person name="Doup L.E."/>
            <person name="Downes M."/>
            <person name="Dugan-Rocha S."/>
            <person name="Dunkov B.C."/>
            <person name="Dunn P."/>
            <person name="Durbin K.J."/>
            <person name="Evangelista C.C."/>
            <person name="Ferraz C."/>
            <person name="Ferriera S."/>
            <person name="Fleischmann W."/>
            <person name="Fosler C."/>
            <person name="Gabrielian A.E."/>
            <person name="Garg N.S."/>
            <person name="Gelbart W.M."/>
            <person name="Glasser K."/>
            <person name="Glodek A."/>
            <person name="Gong F."/>
            <person name="Gorrell J.H."/>
            <person name="Gu Z."/>
            <person name="Guan P."/>
            <person name="Harris M."/>
            <person name="Harris N.L."/>
            <person name="Harvey D.A."/>
            <person name="Heiman T.J."/>
            <person name="Hernandez J.R."/>
            <person name="Houck J."/>
            <person name="Hostin D."/>
            <person name="Houston K.A."/>
            <person name="Howland T.J."/>
            <person name="Wei M.-H."/>
            <person name="Ibegwam C."/>
            <person name="Jalali M."/>
            <person name="Kalush F."/>
            <person name="Karpen G.H."/>
            <person name="Ke Z."/>
            <person name="Kennison J.A."/>
            <person name="Ketchum K.A."/>
            <person name="Kimmel B.E."/>
            <person name="Kodira C.D."/>
            <person name="Kraft C.L."/>
            <person name="Kravitz S."/>
            <person name="Kulp D."/>
            <person name="Lai Z."/>
            <person name="Lasko P."/>
            <person name="Lei Y."/>
            <person name="Levitsky A.A."/>
            <person name="Li J.H."/>
            <person name="Li Z."/>
            <person name="Liang Y."/>
            <person name="Lin X."/>
            <person name="Liu X."/>
            <person name="Mattei B."/>
            <person name="McIntosh T.C."/>
            <person name="McLeod M.P."/>
            <person name="McPherson D."/>
            <person name="Merkulov G."/>
            <person name="Milshina N.V."/>
            <person name="Mobarry C."/>
            <person name="Morris J."/>
            <person name="Moshrefi A."/>
            <person name="Mount S.M."/>
            <person name="Moy M."/>
            <person name="Murphy B."/>
            <person name="Murphy L."/>
            <person name="Muzny D.M."/>
            <person name="Nelson D.L."/>
            <person name="Nelson D.R."/>
            <person name="Nelson K.A."/>
            <person name="Nixon K."/>
            <person name="Nusskern D.R."/>
            <person name="Pacleb J.M."/>
            <person name="Palazzolo M."/>
            <person name="Pittman G.S."/>
            <person name="Pan S."/>
            <person name="Pollard J."/>
            <person name="Puri V."/>
            <person name="Reese M.G."/>
            <person name="Reinert K."/>
            <person name="Remington K."/>
            <person name="Saunders R.D.C."/>
            <person name="Scheeler F."/>
            <person name="Shen H."/>
            <person name="Shue B.C."/>
            <person name="Siden-Kiamos I."/>
            <person name="Simpson M."/>
            <person name="Skupski M.P."/>
            <person name="Smith T.J."/>
            <person name="Spier E."/>
            <person name="Spradling A.C."/>
            <person name="Stapleton M."/>
            <person name="Strong R."/>
            <person name="Sun E."/>
            <person name="Svirskas R."/>
            <person name="Tector C."/>
            <person name="Turner R."/>
            <person name="Venter E."/>
            <person name="Wang A.H."/>
            <person name="Wang X."/>
            <person name="Wang Z.-Y."/>
            <person name="Wassarman D.A."/>
            <person name="Weinstock G.M."/>
            <person name="Weissenbach J."/>
            <person name="Williams S.M."/>
            <person name="Woodage T."/>
            <person name="Worley K.C."/>
            <person name="Wu D."/>
            <person name="Yang S."/>
            <person name="Yao Q.A."/>
            <person name="Ye J."/>
            <person name="Yeh R.-F."/>
            <person name="Zaveri J.S."/>
            <person name="Zhan M."/>
            <person name="Zhang G."/>
            <person name="Zhao Q."/>
            <person name="Zheng L."/>
            <person name="Zheng X.H."/>
            <person name="Zhong F.N."/>
            <person name="Zhong W."/>
            <person name="Zhou X."/>
            <person name="Zhu S.C."/>
            <person name="Zhu X."/>
            <person name="Smith H.O."/>
            <person name="Gibbs R.A."/>
            <person name="Myers E.W."/>
            <person name="Rubin G.M."/>
            <person name="Venter J.C."/>
        </authorList>
    </citation>
    <scope>NUCLEOTIDE SEQUENCE [LARGE SCALE GENOMIC DNA]</scope>
    <source>
        <strain>Berkeley</strain>
    </source>
</reference>
<reference key="2">
    <citation type="journal article" date="2002" name="Genome Biol.">
        <title>Annotation of the Drosophila melanogaster euchromatic genome: a systematic review.</title>
        <authorList>
            <person name="Misra S."/>
            <person name="Crosby M.A."/>
            <person name="Mungall C.J."/>
            <person name="Matthews B.B."/>
            <person name="Campbell K.S."/>
            <person name="Hradecky P."/>
            <person name="Huang Y."/>
            <person name="Kaminker J.S."/>
            <person name="Millburn G.H."/>
            <person name="Prochnik S.E."/>
            <person name="Smith C.D."/>
            <person name="Tupy J.L."/>
            <person name="Whitfield E.J."/>
            <person name="Bayraktaroglu L."/>
            <person name="Berman B.P."/>
            <person name="Bettencourt B.R."/>
            <person name="Celniker S.E."/>
            <person name="de Grey A.D.N.J."/>
            <person name="Drysdale R.A."/>
            <person name="Harris N.L."/>
            <person name="Richter J."/>
            <person name="Russo S."/>
            <person name="Schroeder A.J."/>
            <person name="Shu S.Q."/>
            <person name="Stapleton M."/>
            <person name="Yamada C."/>
            <person name="Ashburner M."/>
            <person name="Gelbart W.M."/>
            <person name="Rubin G.M."/>
            <person name="Lewis S.E."/>
        </authorList>
    </citation>
    <scope>GENOME REANNOTATION</scope>
    <source>
        <strain>Berkeley</strain>
    </source>
</reference>
<reference key="3">
    <citation type="journal article" date="2002" name="Genome Biol.">
        <title>A Drosophila full-length cDNA resource.</title>
        <authorList>
            <person name="Stapleton M."/>
            <person name="Carlson J.W."/>
            <person name="Brokstein P."/>
            <person name="Yu C."/>
            <person name="Champe M."/>
            <person name="George R.A."/>
            <person name="Guarin H."/>
            <person name="Kronmiller B."/>
            <person name="Pacleb J.M."/>
            <person name="Park S."/>
            <person name="Wan K.H."/>
            <person name="Rubin G.M."/>
            <person name="Celniker S.E."/>
        </authorList>
    </citation>
    <scope>NUCLEOTIDE SEQUENCE [LARGE SCALE MRNA]</scope>
    <source>
        <strain>Berkeley</strain>
        <tissue>Embryo</tissue>
    </source>
</reference>
<reference key="4">
    <citation type="journal article" date="2001" name="Mol. Cell. Biol.">
        <title>Drosophila Mediator complex is broadly utilized by diverse gene-specific transcription factors at different types of core promoters.</title>
        <authorList>
            <person name="Park J.M."/>
            <person name="Gim B.S."/>
            <person name="Kim J.M."/>
            <person name="Yoon J.H."/>
            <person name="Kim H.-S."/>
            <person name="Kang J.-G."/>
            <person name="Kim Y.-J."/>
        </authorList>
    </citation>
    <scope>FUNCTION OF THE MEDIATOR COMPLEX</scope>
    <scope>IDENTIFICATION IN A COMPLEX WITH CDK8; MED4; MED6; MED14; MED17; MED18; MED20 AND MED31</scope>
    <scope>DEVELOPMENTAL STAGE</scope>
</reference>
<reference key="5">
    <citation type="journal article" date="2002" name="J. Biol. Chem.">
        <title>Novel Mediator proteins of the small Mediator complex in Drosophila SL2 cells.</title>
        <authorList>
            <person name="Gu J.-Y."/>
            <person name="Park J.M."/>
            <person name="Song E.J."/>
            <person name="Mizuguchi G."/>
            <person name="Yoon J.H."/>
            <person name="Kim-Ha J."/>
            <person name="Lee K.-J."/>
            <person name="Kim Y.-J."/>
        </authorList>
    </citation>
    <scope>IDENTIFICATION BY MASS SPECTROMETRY</scope>
    <scope>IDENTIFICATION IN THE MEDIATOR COMPLEX</scope>
    <scope>INTERACTION WITH MED6 AND MED17</scope>
</reference>
<reference key="6">
    <citation type="journal article" date="2004" name="Nucleic Acids Res.">
        <title>A high resolution protein interaction map of the yeast Mediator complex.</title>
        <authorList>
            <person name="Guglielmi B."/>
            <person name="van Berkum N.L."/>
            <person name="Klapholz B."/>
            <person name="Bijma T."/>
            <person name="Boube M."/>
            <person name="Boschiero C."/>
            <person name="Bourbon H.-M."/>
            <person name="Holstege F.C.P."/>
            <person name="Werner M."/>
        </authorList>
    </citation>
    <scope>INTERACTION WITH MED4; MED7 AND MED10</scope>
</reference>
<dbReference type="EMBL" id="AE014296">
    <property type="protein sequence ID" value="EAL24605.1"/>
    <property type="molecule type" value="Genomic_DNA"/>
</dbReference>
<dbReference type="EMBL" id="AE014296">
    <property type="protein sequence ID" value="EAL24606.1"/>
    <property type="molecule type" value="Genomic_DNA"/>
</dbReference>
<dbReference type="EMBL" id="AY071027">
    <property type="protein sequence ID" value="AAL48649.1"/>
    <property type="molecule type" value="mRNA"/>
</dbReference>
<dbReference type="RefSeq" id="NP_001015223.1">
    <property type="nucleotide sequence ID" value="NM_001015223.3"/>
</dbReference>
<dbReference type="RefSeq" id="NP_001015224.1">
    <property type="nucleotide sequence ID" value="NM_001015224.3"/>
</dbReference>
<dbReference type="SMR" id="Q9W5P1"/>
<dbReference type="BioGRID" id="78102">
    <property type="interactions" value="10"/>
</dbReference>
<dbReference type="ComplexPortal" id="CPX-2308">
    <property type="entry name" value="Core mediator complex"/>
</dbReference>
<dbReference type="FunCoup" id="Q9W5P1">
    <property type="interactions" value="1265"/>
</dbReference>
<dbReference type="IntAct" id="Q9W5P1">
    <property type="interactions" value="6"/>
</dbReference>
<dbReference type="STRING" id="7227.FBpp0112462"/>
<dbReference type="PaxDb" id="7227-FBpp0112462"/>
<dbReference type="DNASU" id="3354977"/>
<dbReference type="EnsemblMetazoa" id="FBtr0113739">
    <property type="protein sequence ID" value="FBpp0112462"/>
    <property type="gene ID" value="FBgn0040020"/>
</dbReference>
<dbReference type="EnsemblMetazoa" id="FBtr0113740">
    <property type="protein sequence ID" value="FBpp0112463"/>
    <property type="gene ID" value="FBgn0040020"/>
</dbReference>
<dbReference type="GeneID" id="3354977"/>
<dbReference type="KEGG" id="dme:Dmel_CG17397"/>
<dbReference type="AGR" id="FB:FBgn0040020"/>
<dbReference type="CTD" id="9412"/>
<dbReference type="FlyBase" id="FBgn0040020">
    <property type="gene designation" value="MED21"/>
</dbReference>
<dbReference type="VEuPathDB" id="VectorBase:FBgn0040020"/>
<dbReference type="eggNOG" id="KOG1510">
    <property type="taxonomic scope" value="Eukaryota"/>
</dbReference>
<dbReference type="GeneTree" id="ENSGT00390000014557"/>
<dbReference type="HOGENOM" id="CLU_126757_0_0_1"/>
<dbReference type="InParanoid" id="Q9W5P1"/>
<dbReference type="OMA" id="DSFPIEA"/>
<dbReference type="OrthoDB" id="526653at2759"/>
<dbReference type="PhylomeDB" id="Q9W5P1"/>
<dbReference type="SignaLink" id="Q9W5P1"/>
<dbReference type="BioGRID-ORCS" id="3354977">
    <property type="hits" value="1 hit in 1 CRISPR screen"/>
</dbReference>
<dbReference type="ChiTaRS" id="MED21">
    <property type="organism name" value="fly"/>
</dbReference>
<dbReference type="GenomeRNAi" id="3354977"/>
<dbReference type="PRO" id="PR:Q9W5P1"/>
<dbReference type="Proteomes" id="UP000000803">
    <property type="component" value="Chromosome 3L"/>
</dbReference>
<dbReference type="Bgee" id="FBgn0040020">
    <property type="expression patterns" value="Expressed in cleaving embryo and 185 other cell types or tissues"/>
</dbReference>
<dbReference type="ExpressionAtlas" id="Q9W5P1">
    <property type="expression patterns" value="baseline and differential"/>
</dbReference>
<dbReference type="GO" id="GO:0016592">
    <property type="term" value="C:mediator complex"/>
    <property type="evidence" value="ECO:0000314"/>
    <property type="project" value="UniProtKB"/>
</dbReference>
<dbReference type="GO" id="GO:0005634">
    <property type="term" value="C:nucleus"/>
    <property type="evidence" value="ECO:0000314"/>
    <property type="project" value="FlyBase"/>
</dbReference>
<dbReference type="GO" id="GO:0003712">
    <property type="term" value="F:transcription coregulator activity"/>
    <property type="evidence" value="ECO:0000315"/>
    <property type="project" value="UniProtKB"/>
</dbReference>
<dbReference type="GO" id="GO:0045893">
    <property type="term" value="P:positive regulation of DNA-templated transcription"/>
    <property type="evidence" value="ECO:0007669"/>
    <property type="project" value="GOC"/>
</dbReference>
<dbReference type="GO" id="GO:0006357">
    <property type="term" value="P:regulation of transcription by RNA polymerase II"/>
    <property type="evidence" value="ECO:0000314"/>
    <property type="project" value="FlyBase"/>
</dbReference>
<dbReference type="Gene3D" id="6.10.280.10">
    <property type="entry name" value="Mediator complex, subunit Med21"/>
    <property type="match status" value="1"/>
</dbReference>
<dbReference type="InterPro" id="IPR037212">
    <property type="entry name" value="Med7/Med21-like"/>
</dbReference>
<dbReference type="InterPro" id="IPR021384">
    <property type="entry name" value="Mediator_Med21"/>
</dbReference>
<dbReference type="PANTHER" id="PTHR13381:SF0">
    <property type="entry name" value="MEDIATOR OF RNA POLYMERASE II TRANSCRIPTION SUBUNIT 21"/>
    <property type="match status" value="1"/>
</dbReference>
<dbReference type="PANTHER" id="PTHR13381">
    <property type="entry name" value="RNA POLYMERASE II HOLOENZYME COMPONENT SRB7"/>
    <property type="match status" value="1"/>
</dbReference>
<dbReference type="Pfam" id="PF11221">
    <property type="entry name" value="Med21"/>
    <property type="match status" value="1"/>
</dbReference>
<dbReference type="SUPFAM" id="SSF140718">
    <property type="entry name" value="Mediator hinge subcomplex-like"/>
    <property type="match status" value="1"/>
</dbReference>
<organism>
    <name type="scientific">Drosophila melanogaster</name>
    <name type="common">Fruit fly</name>
    <dbReference type="NCBI Taxonomy" id="7227"/>
    <lineage>
        <taxon>Eukaryota</taxon>
        <taxon>Metazoa</taxon>
        <taxon>Ecdysozoa</taxon>
        <taxon>Arthropoda</taxon>
        <taxon>Hexapoda</taxon>
        <taxon>Insecta</taxon>
        <taxon>Pterygota</taxon>
        <taxon>Neoptera</taxon>
        <taxon>Endopterygota</taxon>
        <taxon>Diptera</taxon>
        <taxon>Brachycera</taxon>
        <taxon>Muscomorpha</taxon>
        <taxon>Ephydroidea</taxon>
        <taxon>Drosophilidae</taxon>
        <taxon>Drosophila</taxon>
        <taxon>Sophophora</taxon>
    </lineage>
</organism>
<sequence length="142" mass="16069">MADRLTQLQDTVNQQAEHFCNAIGVIQQTSLPSKFVNFERIGPQTPIPCPPQEDYAQLFAQLIARCAKDIDTLIESLPNEDSSIELQNSSLKRLEIENQGTARDLEEVVQKGELLLEKMQYSLECIAQAQLDMQITLKHDLQ</sequence>
<protein>
    <recommendedName>
        <fullName>Mediator of RNA polymerase II transcription subunit 21</fullName>
    </recommendedName>
    <alternativeName>
        <fullName>Mediator complex subunit 21</fullName>
    </alternativeName>
    <alternativeName>
        <fullName>dMED21</fullName>
    </alternativeName>
    <alternativeName>
        <fullName>dSRB7</fullName>
    </alternativeName>
    <alternativeName>
        <fullName>dTRAP19</fullName>
    </alternativeName>
</protein>